<evidence type="ECO:0000255" key="1">
    <source>
        <dbReference type="HAMAP-Rule" id="MF_00494"/>
    </source>
</evidence>
<accession>B2V0J9</accession>
<sequence length="214" mass="23212">MKIFVDTANIEEIKKANELGVICGVTTNPSLIAKEGRDFKEVIKEITSIVDGPISGEVISMECEGMVKEAREIAKIHENMVIKIPMCAEGLKAVNILHKEGIKTNVTLIFSAVQALLAARAGASYVSPFLGRLDDIGSTGMTLIEDISEIFAVHGIETEIISASVRNPIHVLECAKAGSDIATIPYNVIMQMIKHPLTDAGIEKFLKDYEGMNK</sequence>
<keyword id="KW-0963">Cytoplasm</keyword>
<keyword id="KW-0570">Pentose shunt</keyword>
<keyword id="KW-0704">Schiff base</keyword>
<keyword id="KW-0808">Transferase</keyword>
<proteinExistence type="inferred from homology"/>
<feature type="chain" id="PRO_1000126293" description="Probable transaldolase">
    <location>
        <begin position="1"/>
        <end position="214"/>
    </location>
</feature>
<feature type="active site" description="Schiff-base intermediate with substrate" evidence="1">
    <location>
        <position position="83"/>
    </location>
</feature>
<reference key="1">
    <citation type="submission" date="2008-05" db="EMBL/GenBank/DDBJ databases">
        <title>Complete genome sequence of Clostridium botulinum E3 str. Alaska E43.</title>
        <authorList>
            <person name="Brinkac L.M."/>
            <person name="Brown J.L."/>
            <person name="Bruce D."/>
            <person name="Detter C."/>
            <person name="Munk C."/>
            <person name="Smith L.A."/>
            <person name="Smith T.J."/>
            <person name="Sutton G."/>
            <person name="Brettin T.S."/>
        </authorList>
    </citation>
    <scope>NUCLEOTIDE SEQUENCE [LARGE SCALE GENOMIC DNA]</scope>
    <source>
        <strain>Alaska E43 / Type E3</strain>
    </source>
</reference>
<comment type="function">
    <text evidence="1">Transaldolase is important for the balance of metabolites in the pentose-phosphate pathway.</text>
</comment>
<comment type="catalytic activity">
    <reaction evidence="1">
        <text>D-sedoheptulose 7-phosphate + D-glyceraldehyde 3-phosphate = D-erythrose 4-phosphate + beta-D-fructose 6-phosphate</text>
        <dbReference type="Rhea" id="RHEA:17053"/>
        <dbReference type="ChEBI" id="CHEBI:16897"/>
        <dbReference type="ChEBI" id="CHEBI:57483"/>
        <dbReference type="ChEBI" id="CHEBI:57634"/>
        <dbReference type="ChEBI" id="CHEBI:59776"/>
        <dbReference type="EC" id="2.2.1.2"/>
    </reaction>
</comment>
<comment type="pathway">
    <text evidence="1">Carbohydrate degradation; pentose phosphate pathway; D-glyceraldehyde 3-phosphate and beta-D-fructose 6-phosphate from D-ribose 5-phosphate and D-xylulose 5-phosphate (non-oxidative stage): step 2/3.</text>
</comment>
<comment type="subcellular location">
    <subcellularLocation>
        <location evidence="1">Cytoplasm</location>
    </subcellularLocation>
</comment>
<comment type="similarity">
    <text evidence="1">Belongs to the transaldolase family. Type 3B subfamily.</text>
</comment>
<name>TAL_CLOBA</name>
<dbReference type="EC" id="2.2.1.2" evidence="1"/>
<dbReference type="EMBL" id="CP001078">
    <property type="protein sequence ID" value="ACD51743.1"/>
    <property type="molecule type" value="Genomic_DNA"/>
</dbReference>
<dbReference type="SMR" id="B2V0J9"/>
<dbReference type="KEGG" id="cbt:CLH_1499"/>
<dbReference type="HOGENOM" id="CLU_079764_0_0_9"/>
<dbReference type="UniPathway" id="UPA00115">
    <property type="reaction ID" value="UER00414"/>
</dbReference>
<dbReference type="GO" id="GO:0005737">
    <property type="term" value="C:cytoplasm"/>
    <property type="evidence" value="ECO:0007669"/>
    <property type="project" value="UniProtKB-SubCell"/>
</dbReference>
<dbReference type="GO" id="GO:0016832">
    <property type="term" value="F:aldehyde-lyase activity"/>
    <property type="evidence" value="ECO:0007669"/>
    <property type="project" value="InterPro"/>
</dbReference>
<dbReference type="GO" id="GO:0004801">
    <property type="term" value="F:transaldolase activity"/>
    <property type="evidence" value="ECO:0007669"/>
    <property type="project" value="UniProtKB-UniRule"/>
</dbReference>
<dbReference type="GO" id="GO:0005975">
    <property type="term" value="P:carbohydrate metabolic process"/>
    <property type="evidence" value="ECO:0007669"/>
    <property type="project" value="InterPro"/>
</dbReference>
<dbReference type="GO" id="GO:0006098">
    <property type="term" value="P:pentose-phosphate shunt"/>
    <property type="evidence" value="ECO:0007669"/>
    <property type="project" value="UniProtKB-UniRule"/>
</dbReference>
<dbReference type="CDD" id="cd00956">
    <property type="entry name" value="Transaldolase_FSA"/>
    <property type="match status" value="1"/>
</dbReference>
<dbReference type="FunFam" id="3.20.20.70:FF:000018">
    <property type="entry name" value="Probable transaldolase"/>
    <property type="match status" value="1"/>
</dbReference>
<dbReference type="Gene3D" id="3.20.20.70">
    <property type="entry name" value="Aldolase class I"/>
    <property type="match status" value="1"/>
</dbReference>
<dbReference type="HAMAP" id="MF_00494">
    <property type="entry name" value="Transaldolase_3b"/>
    <property type="match status" value="1"/>
</dbReference>
<dbReference type="InterPro" id="IPR013785">
    <property type="entry name" value="Aldolase_TIM"/>
</dbReference>
<dbReference type="InterPro" id="IPR001585">
    <property type="entry name" value="TAL/FSA"/>
</dbReference>
<dbReference type="InterPro" id="IPR022999">
    <property type="entry name" value="Transaldolase_3B"/>
</dbReference>
<dbReference type="InterPro" id="IPR004731">
    <property type="entry name" value="Transaldolase_3B/F6P_aldolase"/>
</dbReference>
<dbReference type="InterPro" id="IPR018225">
    <property type="entry name" value="Transaldolase_AS"/>
</dbReference>
<dbReference type="InterPro" id="IPR033919">
    <property type="entry name" value="TSA/FSA_arc/bac"/>
</dbReference>
<dbReference type="NCBIfam" id="TIGR00875">
    <property type="entry name" value="fsa_talC_mipB"/>
    <property type="match status" value="1"/>
</dbReference>
<dbReference type="PANTHER" id="PTHR10683">
    <property type="entry name" value="TRANSALDOLASE"/>
    <property type="match status" value="1"/>
</dbReference>
<dbReference type="PANTHER" id="PTHR10683:SF36">
    <property type="entry name" value="TRANSALDOLASE"/>
    <property type="match status" value="1"/>
</dbReference>
<dbReference type="Pfam" id="PF00923">
    <property type="entry name" value="TAL_FSA"/>
    <property type="match status" value="1"/>
</dbReference>
<dbReference type="SUPFAM" id="SSF51569">
    <property type="entry name" value="Aldolase"/>
    <property type="match status" value="1"/>
</dbReference>
<dbReference type="PROSITE" id="PS01054">
    <property type="entry name" value="TRANSALDOLASE_1"/>
    <property type="match status" value="1"/>
</dbReference>
<protein>
    <recommendedName>
        <fullName evidence="1">Probable transaldolase</fullName>
        <ecNumber evidence="1">2.2.1.2</ecNumber>
    </recommendedName>
</protein>
<organism>
    <name type="scientific">Clostridium botulinum (strain Alaska E43 / Type E3)</name>
    <dbReference type="NCBI Taxonomy" id="508767"/>
    <lineage>
        <taxon>Bacteria</taxon>
        <taxon>Bacillati</taxon>
        <taxon>Bacillota</taxon>
        <taxon>Clostridia</taxon>
        <taxon>Eubacteriales</taxon>
        <taxon>Clostridiaceae</taxon>
        <taxon>Clostridium</taxon>
    </lineage>
</organism>
<gene>
    <name evidence="1" type="primary">tal</name>
    <name type="ordered locus">CLH_1499</name>
</gene>